<protein>
    <recommendedName>
        <fullName evidence="1">Protein translocase subunit SecA</fullName>
        <ecNumber evidence="1">7.4.2.8</ecNumber>
    </recommendedName>
</protein>
<feature type="chain" id="PRO_0000321001" description="Protein translocase subunit SecA">
    <location>
        <begin position="1"/>
        <end position="901"/>
    </location>
</feature>
<feature type="region of interest" description="Disordered" evidence="2">
    <location>
        <begin position="859"/>
        <end position="901"/>
    </location>
</feature>
<feature type="compositionally biased region" description="Basic residues" evidence="2">
    <location>
        <begin position="891"/>
        <end position="901"/>
    </location>
</feature>
<feature type="binding site" evidence="1">
    <location>
        <position position="87"/>
    </location>
    <ligand>
        <name>ATP</name>
        <dbReference type="ChEBI" id="CHEBI:30616"/>
    </ligand>
</feature>
<feature type="binding site" evidence="1">
    <location>
        <begin position="105"/>
        <end position="109"/>
    </location>
    <ligand>
        <name>ATP</name>
        <dbReference type="ChEBI" id="CHEBI:30616"/>
    </ligand>
</feature>
<feature type="binding site" evidence="1">
    <location>
        <position position="512"/>
    </location>
    <ligand>
        <name>ATP</name>
        <dbReference type="ChEBI" id="CHEBI:30616"/>
    </ligand>
</feature>
<feature type="binding site" evidence="1">
    <location>
        <position position="885"/>
    </location>
    <ligand>
        <name>Zn(2+)</name>
        <dbReference type="ChEBI" id="CHEBI:29105"/>
    </ligand>
</feature>
<feature type="binding site" evidence="1">
    <location>
        <position position="887"/>
    </location>
    <ligand>
        <name>Zn(2+)</name>
        <dbReference type="ChEBI" id="CHEBI:29105"/>
    </ligand>
</feature>
<feature type="binding site" evidence="1">
    <location>
        <position position="896"/>
    </location>
    <ligand>
        <name>Zn(2+)</name>
        <dbReference type="ChEBI" id="CHEBI:29105"/>
    </ligand>
</feature>
<feature type="binding site" evidence="1">
    <location>
        <position position="897"/>
    </location>
    <ligand>
        <name>Zn(2+)</name>
        <dbReference type="ChEBI" id="CHEBI:29105"/>
    </ligand>
</feature>
<name>SECA_SHIBS</name>
<sequence length="901" mass="102023">MLIKLLTKVFGSRNDRTLRRMRKVVNIINAMEPEMEKLSDEELKGKTAEFRARLEKGEVLENLIPEAFAVVREASKRVFGMRHFDVQLLGGMVLNERCIAEMRTGEGKTLTATLPAYLNALTGKGVHVVTVNDYLAQRDAENNRPLFEFLGLTVGINLPGMPAPAKREAYAADITYGTNNEYGFDYLRDNMAFSPEERVQRKLHYALVDEVDSILIDEARTPLIISGPAEDSSEMYKRVNKIIPHLIRQEKEDSETFQGEGHFSVDEKSRQVNLTERGLVLIEELLVKEGIMDEGESLYSPANIMLMHHVTAALRAHALFTRDVDYIVKDGEVIIVDEHTGRTMQGRRWSDGLHQAVEAKEGVQIQNENQTLASITFQNYFRLYEKLAGMTGTADTEAFEFSSIYKLDTVVVPTNRPMIRKDLPDLVYMTEAEKIQAIIEDIKERTAKGQPVLVGTISIEKSELVSNELTKAGIKHNVLNAKFHANEAAIVAQAGYPAAVTIATNMAGRGTDIVLGGSWQAEVAALENPTAEQIEKIKADWQVRHDAVLEAGGLHIIGTERHESRRIDNQLRGRSGRQGDAGSSRFYLSMEDALMRIFASDRVSGMMRKLGMKPGEAIEHPWVTKAIANAQRKVESRNFDIRKQLLEYDDVANDQRRAIYSQRNELLDVSDVSETINSIREDVFKATIDAYIPPQSLEEMWDIPGLQERLKNDFDLDLPIAEWLDKEPELHEETLRERILAQSIEVYQRKEEVVGAEMMRHFEKGVMLQTLDSLWKEHLAAMDYLRQGIHLRGYAQKDPKQEYKRESFSMFAAMLESLKYEVISTLSKVQVRMPEEVEELEQQRRMEAERLAQMQQLSHQDDDSAAAAALAAQTGERKVGRNDPCPCGSGKKYKQCHGRLQ</sequence>
<accession>Q326D7</accession>
<dbReference type="EC" id="7.4.2.8" evidence="1"/>
<dbReference type="EMBL" id="CP000036">
    <property type="protein sequence ID" value="ABB64821.1"/>
    <property type="molecule type" value="Genomic_DNA"/>
</dbReference>
<dbReference type="RefSeq" id="WP_000905789.1">
    <property type="nucleotide sequence ID" value="NC_007613.1"/>
</dbReference>
<dbReference type="SMR" id="Q326D7"/>
<dbReference type="GeneID" id="93777336"/>
<dbReference type="KEGG" id="sbo:SBO_0086"/>
<dbReference type="HOGENOM" id="CLU_005314_3_0_6"/>
<dbReference type="Proteomes" id="UP000007067">
    <property type="component" value="Chromosome"/>
</dbReference>
<dbReference type="GO" id="GO:0031522">
    <property type="term" value="C:cell envelope Sec protein transport complex"/>
    <property type="evidence" value="ECO:0007669"/>
    <property type="project" value="TreeGrafter"/>
</dbReference>
<dbReference type="GO" id="GO:0005829">
    <property type="term" value="C:cytosol"/>
    <property type="evidence" value="ECO:0007669"/>
    <property type="project" value="TreeGrafter"/>
</dbReference>
<dbReference type="GO" id="GO:0005886">
    <property type="term" value="C:plasma membrane"/>
    <property type="evidence" value="ECO:0007669"/>
    <property type="project" value="UniProtKB-SubCell"/>
</dbReference>
<dbReference type="GO" id="GO:0005524">
    <property type="term" value="F:ATP binding"/>
    <property type="evidence" value="ECO:0007669"/>
    <property type="project" value="UniProtKB-UniRule"/>
</dbReference>
<dbReference type="GO" id="GO:0046872">
    <property type="term" value="F:metal ion binding"/>
    <property type="evidence" value="ECO:0007669"/>
    <property type="project" value="UniProtKB-KW"/>
</dbReference>
<dbReference type="GO" id="GO:0008564">
    <property type="term" value="F:protein-exporting ATPase activity"/>
    <property type="evidence" value="ECO:0007669"/>
    <property type="project" value="UniProtKB-EC"/>
</dbReference>
<dbReference type="GO" id="GO:0065002">
    <property type="term" value="P:intracellular protein transmembrane transport"/>
    <property type="evidence" value="ECO:0007669"/>
    <property type="project" value="UniProtKB-UniRule"/>
</dbReference>
<dbReference type="GO" id="GO:0017038">
    <property type="term" value="P:protein import"/>
    <property type="evidence" value="ECO:0007669"/>
    <property type="project" value="InterPro"/>
</dbReference>
<dbReference type="GO" id="GO:0006605">
    <property type="term" value="P:protein targeting"/>
    <property type="evidence" value="ECO:0007669"/>
    <property type="project" value="UniProtKB-UniRule"/>
</dbReference>
<dbReference type="GO" id="GO:0043952">
    <property type="term" value="P:protein transport by the Sec complex"/>
    <property type="evidence" value="ECO:0007669"/>
    <property type="project" value="TreeGrafter"/>
</dbReference>
<dbReference type="CDD" id="cd17928">
    <property type="entry name" value="DEXDc_SecA"/>
    <property type="match status" value="1"/>
</dbReference>
<dbReference type="CDD" id="cd18803">
    <property type="entry name" value="SF2_C_secA"/>
    <property type="match status" value="1"/>
</dbReference>
<dbReference type="FunFam" id="1.10.3060.10:FF:000001">
    <property type="entry name" value="Preprotein translocase subunit SecA"/>
    <property type="match status" value="1"/>
</dbReference>
<dbReference type="FunFam" id="3.40.50.300:FF:000081">
    <property type="entry name" value="Preprotein translocase subunit SecA"/>
    <property type="match status" value="1"/>
</dbReference>
<dbReference type="FunFam" id="3.40.50.300:FF:000113">
    <property type="entry name" value="Preprotein translocase subunit SecA"/>
    <property type="match status" value="1"/>
</dbReference>
<dbReference type="FunFam" id="3.90.1440.10:FF:000001">
    <property type="entry name" value="Preprotein translocase subunit SecA"/>
    <property type="match status" value="1"/>
</dbReference>
<dbReference type="Gene3D" id="1.10.3060.10">
    <property type="entry name" value="Helical scaffold and wing domains of SecA"/>
    <property type="match status" value="1"/>
</dbReference>
<dbReference type="Gene3D" id="3.40.50.300">
    <property type="entry name" value="P-loop containing nucleotide triphosphate hydrolases"/>
    <property type="match status" value="2"/>
</dbReference>
<dbReference type="Gene3D" id="3.90.1440.10">
    <property type="entry name" value="SecA, preprotein cross-linking domain"/>
    <property type="match status" value="1"/>
</dbReference>
<dbReference type="HAMAP" id="MF_01382">
    <property type="entry name" value="SecA"/>
    <property type="match status" value="1"/>
</dbReference>
<dbReference type="InterPro" id="IPR014001">
    <property type="entry name" value="Helicase_ATP-bd"/>
</dbReference>
<dbReference type="InterPro" id="IPR001650">
    <property type="entry name" value="Helicase_C-like"/>
</dbReference>
<dbReference type="InterPro" id="IPR027417">
    <property type="entry name" value="P-loop_NTPase"/>
</dbReference>
<dbReference type="InterPro" id="IPR004027">
    <property type="entry name" value="SEC_C_motif"/>
</dbReference>
<dbReference type="InterPro" id="IPR000185">
    <property type="entry name" value="SecA"/>
</dbReference>
<dbReference type="InterPro" id="IPR020937">
    <property type="entry name" value="SecA_CS"/>
</dbReference>
<dbReference type="InterPro" id="IPR011115">
    <property type="entry name" value="SecA_DEAD"/>
</dbReference>
<dbReference type="InterPro" id="IPR014018">
    <property type="entry name" value="SecA_motor_DEAD"/>
</dbReference>
<dbReference type="InterPro" id="IPR011130">
    <property type="entry name" value="SecA_preprotein_X-link_dom"/>
</dbReference>
<dbReference type="InterPro" id="IPR044722">
    <property type="entry name" value="SecA_SF2_C"/>
</dbReference>
<dbReference type="InterPro" id="IPR011116">
    <property type="entry name" value="SecA_Wing/Scaffold"/>
</dbReference>
<dbReference type="InterPro" id="IPR036266">
    <property type="entry name" value="SecA_Wing/Scaffold_sf"/>
</dbReference>
<dbReference type="InterPro" id="IPR036670">
    <property type="entry name" value="SecA_X-link_sf"/>
</dbReference>
<dbReference type="NCBIfam" id="NF009538">
    <property type="entry name" value="PRK12904.1"/>
    <property type="match status" value="1"/>
</dbReference>
<dbReference type="NCBIfam" id="TIGR00963">
    <property type="entry name" value="secA"/>
    <property type="match status" value="1"/>
</dbReference>
<dbReference type="PANTHER" id="PTHR30612:SF0">
    <property type="entry name" value="CHLOROPLAST PROTEIN-TRANSPORTING ATPASE"/>
    <property type="match status" value="1"/>
</dbReference>
<dbReference type="PANTHER" id="PTHR30612">
    <property type="entry name" value="SECA INNER MEMBRANE COMPONENT OF SEC PROTEIN SECRETION SYSTEM"/>
    <property type="match status" value="1"/>
</dbReference>
<dbReference type="Pfam" id="PF21090">
    <property type="entry name" value="P-loop_SecA"/>
    <property type="match status" value="1"/>
</dbReference>
<dbReference type="Pfam" id="PF02810">
    <property type="entry name" value="SEC-C"/>
    <property type="match status" value="1"/>
</dbReference>
<dbReference type="Pfam" id="PF07517">
    <property type="entry name" value="SecA_DEAD"/>
    <property type="match status" value="1"/>
</dbReference>
<dbReference type="Pfam" id="PF01043">
    <property type="entry name" value="SecA_PP_bind"/>
    <property type="match status" value="1"/>
</dbReference>
<dbReference type="Pfam" id="PF07516">
    <property type="entry name" value="SecA_SW"/>
    <property type="match status" value="1"/>
</dbReference>
<dbReference type="PRINTS" id="PR00906">
    <property type="entry name" value="SECA"/>
</dbReference>
<dbReference type="SMART" id="SM00957">
    <property type="entry name" value="SecA_DEAD"/>
    <property type="match status" value="1"/>
</dbReference>
<dbReference type="SMART" id="SM00958">
    <property type="entry name" value="SecA_PP_bind"/>
    <property type="match status" value="1"/>
</dbReference>
<dbReference type="SUPFAM" id="SSF81886">
    <property type="entry name" value="Helical scaffold and wing domains of SecA"/>
    <property type="match status" value="1"/>
</dbReference>
<dbReference type="SUPFAM" id="SSF52540">
    <property type="entry name" value="P-loop containing nucleoside triphosphate hydrolases"/>
    <property type="match status" value="2"/>
</dbReference>
<dbReference type="SUPFAM" id="SSF81767">
    <property type="entry name" value="Pre-protein crosslinking domain of SecA"/>
    <property type="match status" value="1"/>
</dbReference>
<dbReference type="PROSITE" id="PS01312">
    <property type="entry name" value="SECA"/>
    <property type="match status" value="1"/>
</dbReference>
<dbReference type="PROSITE" id="PS51196">
    <property type="entry name" value="SECA_MOTOR_DEAD"/>
    <property type="match status" value="1"/>
</dbReference>
<gene>
    <name evidence="1" type="primary">secA</name>
    <name type="ordered locus">SBO_0086</name>
</gene>
<evidence type="ECO:0000255" key="1">
    <source>
        <dbReference type="HAMAP-Rule" id="MF_01382"/>
    </source>
</evidence>
<evidence type="ECO:0000256" key="2">
    <source>
        <dbReference type="SAM" id="MobiDB-lite"/>
    </source>
</evidence>
<comment type="function">
    <text evidence="1">Part of the Sec protein translocase complex. Interacts with the SecYEG preprotein conducting channel. Has a central role in coupling the hydrolysis of ATP to the transfer of proteins into and across the cell membrane, serving both as a receptor for the preprotein-SecB complex and as an ATP-driven molecular motor driving the stepwise translocation of polypeptide chains across the membrane.</text>
</comment>
<comment type="catalytic activity">
    <reaction evidence="1">
        <text>ATP + H2O + cellular proteinSide 1 = ADP + phosphate + cellular proteinSide 2.</text>
        <dbReference type="EC" id="7.4.2.8"/>
    </reaction>
</comment>
<comment type="cofactor">
    <cofactor evidence="1">
        <name>Zn(2+)</name>
        <dbReference type="ChEBI" id="CHEBI:29105"/>
    </cofactor>
    <text evidence="1">May bind 1 zinc ion per subunit.</text>
</comment>
<comment type="subunit">
    <text evidence="1">Monomer and homodimer. Part of the essential Sec protein translocation apparatus which comprises SecA, SecYEG and auxiliary proteins SecDF-YajC and YidC.</text>
</comment>
<comment type="subcellular location">
    <subcellularLocation>
        <location evidence="1">Cell inner membrane</location>
        <topology evidence="1">Peripheral membrane protein</topology>
        <orientation evidence="1">Cytoplasmic side</orientation>
    </subcellularLocation>
    <subcellularLocation>
        <location evidence="1">Cytoplasm</location>
    </subcellularLocation>
    <text evidence="1">Distribution is 50-50.</text>
</comment>
<comment type="induction">
    <text evidence="1">Repressed under conditions of excess protein secretion capacity and derepressed when protein secretion becomes limiting. This is regulated by SecM.</text>
</comment>
<comment type="similarity">
    <text evidence="1">Belongs to the SecA family.</text>
</comment>
<organism>
    <name type="scientific">Shigella boydii serotype 4 (strain Sb227)</name>
    <dbReference type="NCBI Taxonomy" id="300268"/>
    <lineage>
        <taxon>Bacteria</taxon>
        <taxon>Pseudomonadati</taxon>
        <taxon>Pseudomonadota</taxon>
        <taxon>Gammaproteobacteria</taxon>
        <taxon>Enterobacterales</taxon>
        <taxon>Enterobacteriaceae</taxon>
        <taxon>Shigella</taxon>
    </lineage>
</organism>
<keyword id="KW-0067">ATP-binding</keyword>
<keyword id="KW-0997">Cell inner membrane</keyword>
<keyword id="KW-1003">Cell membrane</keyword>
<keyword id="KW-0963">Cytoplasm</keyword>
<keyword id="KW-0472">Membrane</keyword>
<keyword id="KW-0479">Metal-binding</keyword>
<keyword id="KW-0547">Nucleotide-binding</keyword>
<keyword id="KW-0653">Protein transport</keyword>
<keyword id="KW-1278">Translocase</keyword>
<keyword id="KW-0811">Translocation</keyword>
<keyword id="KW-0813">Transport</keyword>
<keyword id="KW-0862">Zinc</keyword>
<proteinExistence type="inferred from homology"/>
<reference key="1">
    <citation type="journal article" date="2005" name="Nucleic Acids Res.">
        <title>Genome dynamics and diversity of Shigella species, the etiologic agents of bacillary dysentery.</title>
        <authorList>
            <person name="Yang F."/>
            <person name="Yang J."/>
            <person name="Zhang X."/>
            <person name="Chen L."/>
            <person name="Jiang Y."/>
            <person name="Yan Y."/>
            <person name="Tang X."/>
            <person name="Wang J."/>
            <person name="Xiong Z."/>
            <person name="Dong J."/>
            <person name="Xue Y."/>
            <person name="Zhu Y."/>
            <person name="Xu X."/>
            <person name="Sun L."/>
            <person name="Chen S."/>
            <person name="Nie H."/>
            <person name="Peng J."/>
            <person name="Xu J."/>
            <person name="Wang Y."/>
            <person name="Yuan Z."/>
            <person name="Wen Y."/>
            <person name="Yao Z."/>
            <person name="Shen Y."/>
            <person name="Qiang B."/>
            <person name="Hou Y."/>
            <person name="Yu J."/>
            <person name="Jin Q."/>
        </authorList>
    </citation>
    <scope>NUCLEOTIDE SEQUENCE [LARGE SCALE GENOMIC DNA]</scope>
    <source>
        <strain>Sb227</strain>
    </source>
</reference>